<reference key="1">
    <citation type="journal article" date="2006" name="J. Bacteriol.">
        <title>Comparison of the genome sequence of the poultry pathogen Bordetella avium with those of B. bronchiseptica, B. pertussis, and B. parapertussis reveals extensive diversity in surface structures associated with host interaction.</title>
        <authorList>
            <person name="Sebaihia M."/>
            <person name="Preston A."/>
            <person name="Maskell D.J."/>
            <person name="Kuzmiak H."/>
            <person name="Connell T.D."/>
            <person name="King N.D."/>
            <person name="Orndorff P.E."/>
            <person name="Miyamoto D.M."/>
            <person name="Thomson N.R."/>
            <person name="Harris D."/>
            <person name="Goble A."/>
            <person name="Lord A."/>
            <person name="Murphy L."/>
            <person name="Quail M.A."/>
            <person name="Rutter S."/>
            <person name="Squares R."/>
            <person name="Squares S."/>
            <person name="Woodward J."/>
            <person name="Parkhill J."/>
            <person name="Temple L.M."/>
        </authorList>
    </citation>
    <scope>NUCLEOTIDE SEQUENCE [LARGE SCALE GENOMIC DNA]</scope>
    <source>
        <strain>197N</strain>
    </source>
</reference>
<evidence type="ECO:0000255" key="1">
    <source>
        <dbReference type="HAMAP-Rule" id="MF_01554"/>
    </source>
</evidence>
<dbReference type="EC" id="5.4.2.10" evidence="1"/>
<dbReference type="EMBL" id="AM167904">
    <property type="protein sequence ID" value="CAJ48544.1"/>
    <property type="molecule type" value="Genomic_DNA"/>
</dbReference>
<dbReference type="RefSeq" id="WP_012416623.1">
    <property type="nucleotide sequence ID" value="NC_010645.1"/>
</dbReference>
<dbReference type="SMR" id="Q2KVQ6"/>
<dbReference type="STRING" id="360910.BAV0933"/>
<dbReference type="KEGG" id="bav:BAV0933"/>
<dbReference type="eggNOG" id="COG1109">
    <property type="taxonomic scope" value="Bacteria"/>
</dbReference>
<dbReference type="HOGENOM" id="CLU_016950_7_0_4"/>
<dbReference type="OrthoDB" id="9803322at2"/>
<dbReference type="Proteomes" id="UP000001977">
    <property type="component" value="Chromosome"/>
</dbReference>
<dbReference type="GO" id="GO:0005829">
    <property type="term" value="C:cytosol"/>
    <property type="evidence" value="ECO:0007669"/>
    <property type="project" value="TreeGrafter"/>
</dbReference>
<dbReference type="GO" id="GO:0000287">
    <property type="term" value="F:magnesium ion binding"/>
    <property type="evidence" value="ECO:0007669"/>
    <property type="project" value="UniProtKB-UniRule"/>
</dbReference>
<dbReference type="GO" id="GO:0008966">
    <property type="term" value="F:phosphoglucosamine mutase activity"/>
    <property type="evidence" value="ECO:0007669"/>
    <property type="project" value="UniProtKB-UniRule"/>
</dbReference>
<dbReference type="GO" id="GO:0004615">
    <property type="term" value="F:phosphomannomutase activity"/>
    <property type="evidence" value="ECO:0007669"/>
    <property type="project" value="TreeGrafter"/>
</dbReference>
<dbReference type="GO" id="GO:0005975">
    <property type="term" value="P:carbohydrate metabolic process"/>
    <property type="evidence" value="ECO:0007669"/>
    <property type="project" value="InterPro"/>
</dbReference>
<dbReference type="GO" id="GO:0009252">
    <property type="term" value="P:peptidoglycan biosynthetic process"/>
    <property type="evidence" value="ECO:0007669"/>
    <property type="project" value="TreeGrafter"/>
</dbReference>
<dbReference type="GO" id="GO:0006048">
    <property type="term" value="P:UDP-N-acetylglucosamine biosynthetic process"/>
    <property type="evidence" value="ECO:0007669"/>
    <property type="project" value="TreeGrafter"/>
</dbReference>
<dbReference type="CDD" id="cd05802">
    <property type="entry name" value="GlmM"/>
    <property type="match status" value="1"/>
</dbReference>
<dbReference type="FunFam" id="3.40.120.10:FF:000001">
    <property type="entry name" value="Phosphoglucosamine mutase"/>
    <property type="match status" value="1"/>
</dbReference>
<dbReference type="FunFam" id="3.40.120.10:FF:000003">
    <property type="entry name" value="Phosphoglucosamine mutase"/>
    <property type="match status" value="1"/>
</dbReference>
<dbReference type="Gene3D" id="3.40.120.10">
    <property type="entry name" value="Alpha-D-Glucose-1,6-Bisphosphate, subunit A, domain 3"/>
    <property type="match status" value="3"/>
</dbReference>
<dbReference type="Gene3D" id="3.30.310.50">
    <property type="entry name" value="Alpha-D-phosphohexomutase, C-terminal domain"/>
    <property type="match status" value="1"/>
</dbReference>
<dbReference type="HAMAP" id="MF_01554_B">
    <property type="entry name" value="GlmM_B"/>
    <property type="match status" value="1"/>
</dbReference>
<dbReference type="InterPro" id="IPR005844">
    <property type="entry name" value="A-D-PHexomutase_a/b/a-I"/>
</dbReference>
<dbReference type="InterPro" id="IPR016055">
    <property type="entry name" value="A-D-PHexomutase_a/b/a-I/II/III"/>
</dbReference>
<dbReference type="InterPro" id="IPR005845">
    <property type="entry name" value="A-D-PHexomutase_a/b/a-II"/>
</dbReference>
<dbReference type="InterPro" id="IPR005846">
    <property type="entry name" value="A-D-PHexomutase_a/b/a-III"/>
</dbReference>
<dbReference type="InterPro" id="IPR005843">
    <property type="entry name" value="A-D-PHexomutase_C"/>
</dbReference>
<dbReference type="InterPro" id="IPR036900">
    <property type="entry name" value="A-D-PHexomutase_C_sf"/>
</dbReference>
<dbReference type="InterPro" id="IPR016066">
    <property type="entry name" value="A-D-PHexomutase_CS"/>
</dbReference>
<dbReference type="InterPro" id="IPR005841">
    <property type="entry name" value="Alpha-D-phosphohexomutase_SF"/>
</dbReference>
<dbReference type="InterPro" id="IPR006352">
    <property type="entry name" value="GlmM_bact"/>
</dbReference>
<dbReference type="InterPro" id="IPR050060">
    <property type="entry name" value="Phosphoglucosamine_mutase"/>
</dbReference>
<dbReference type="NCBIfam" id="TIGR01455">
    <property type="entry name" value="glmM"/>
    <property type="match status" value="1"/>
</dbReference>
<dbReference type="NCBIfam" id="NF008139">
    <property type="entry name" value="PRK10887.1"/>
    <property type="match status" value="1"/>
</dbReference>
<dbReference type="PANTHER" id="PTHR42946:SF1">
    <property type="entry name" value="PHOSPHOGLUCOMUTASE (ALPHA-D-GLUCOSE-1,6-BISPHOSPHATE-DEPENDENT)"/>
    <property type="match status" value="1"/>
</dbReference>
<dbReference type="PANTHER" id="PTHR42946">
    <property type="entry name" value="PHOSPHOHEXOSE MUTASE"/>
    <property type="match status" value="1"/>
</dbReference>
<dbReference type="Pfam" id="PF02878">
    <property type="entry name" value="PGM_PMM_I"/>
    <property type="match status" value="1"/>
</dbReference>
<dbReference type="Pfam" id="PF02879">
    <property type="entry name" value="PGM_PMM_II"/>
    <property type="match status" value="1"/>
</dbReference>
<dbReference type="Pfam" id="PF02880">
    <property type="entry name" value="PGM_PMM_III"/>
    <property type="match status" value="1"/>
</dbReference>
<dbReference type="Pfam" id="PF00408">
    <property type="entry name" value="PGM_PMM_IV"/>
    <property type="match status" value="1"/>
</dbReference>
<dbReference type="PRINTS" id="PR00509">
    <property type="entry name" value="PGMPMM"/>
</dbReference>
<dbReference type="SUPFAM" id="SSF55957">
    <property type="entry name" value="Phosphoglucomutase, C-terminal domain"/>
    <property type="match status" value="1"/>
</dbReference>
<dbReference type="SUPFAM" id="SSF53738">
    <property type="entry name" value="Phosphoglucomutase, first 3 domains"/>
    <property type="match status" value="3"/>
</dbReference>
<dbReference type="PROSITE" id="PS00710">
    <property type="entry name" value="PGM_PMM"/>
    <property type="match status" value="1"/>
</dbReference>
<gene>
    <name evidence="1" type="primary">glmM</name>
    <name type="ordered locus">BAV0933</name>
</gene>
<sequence>MSQRKYFGTDGVRGEVGGPVINAAFALRLGYAAGRVLVRRNASRQGGRPQVLIGKDTRISGYMLESALEAGLSAAGIDVVLAGPIPTPGVAYLTRALRLVAGIVISASHNPYQDNGIKFFSAEGTKLPDEVEAEIEAALEQELGCVKSEDLGRARRMSDSQGRYIEFCKSTVPHSLDLHGMKLVVDAANGAAYHIAPHVFRELGAEVYAIGVSPDGFNINKGVGALHPESLAEEVKARGAHYGIALDGDADRLQMVDASGRIYNGDELLYAIVRDRMRQGKVEGVVGTLMTNYGFELAMGRLGVAFERANVGDRYVLEQLLARGWQFGGESSGHLLCLDCHTTGDGTIAALQVLAALHANKASLSDWIADLRLYPQVMINVPLQPGQDWKTHAGLAAARAGVEAELAGRGRVLIRASGTEPKLRLMVEAEDFALAQASAQKLADSLG</sequence>
<name>GLMM_BORA1</name>
<organism>
    <name type="scientific">Bordetella avium (strain 197N)</name>
    <dbReference type="NCBI Taxonomy" id="360910"/>
    <lineage>
        <taxon>Bacteria</taxon>
        <taxon>Pseudomonadati</taxon>
        <taxon>Pseudomonadota</taxon>
        <taxon>Betaproteobacteria</taxon>
        <taxon>Burkholderiales</taxon>
        <taxon>Alcaligenaceae</taxon>
        <taxon>Bordetella</taxon>
    </lineage>
</organism>
<proteinExistence type="inferred from homology"/>
<feature type="chain" id="PRO_0000301283" description="Phosphoglucosamine mutase">
    <location>
        <begin position="1"/>
        <end position="447"/>
    </location>
</feature>
<feature type="active site" description="Phosphoserine intermediate" evidence="1">
    <location>
        <position position="108"/>
    </location>
</feature>
<feature type="binding site" description="via phosphate group" evidence="1">
    <location>
        <position position="108"/>
    </location>
    <ligand>
        <name>Mg(2+)</name>
        <dbReference type="ChEBI" id="CHEBI:18420"/>
    </ligand>
</feature>
<feature type="binding site" evidence="1">
    <location>
        <position position="247"/>
    </location>
    <ligand>
        <name>Mg(2+)</name>
        <dbReference type="ChEBI" id="CHEBI:18420"/>
    </ligand>
</feature>
<feature type="binding site" evidence="1">
    <location>
        <position position="249"/>
    </location>
    <ligand>
        <name>Mg(2+)</name>
        <dbReference type="ChEBI" id="CHEBI:18420"/>
    </ligand>
</feature>
<feature type="binding site" evidence="1">
    <location>
        <position position="251"/>
    </location>
    <ligand>
        <name>Mg(2+)</name>
        <dbReference type="ChEBI" id="CHEBI:18420"/>
    </ligand>
</feature>
<feature type="modified residue" description="Phosphoserine" evidence="1">
    <location>
        <position position="108"/>
    </location>
</feature>
<protein>
    <recommendedName>
        <fullName evidence="1">Phosphoglucosamine mutase</fullName>
        <ecNumber evidence="1">5.4.2.10</ecNumber>
    </recommendedName>
</protein>
<accession>Q2KVQ6</accession>
<keyword id="KW-0413">Isomerase</keyword>
<keyword id="KW-0460">Magnesium</keyword>
<keyword id="KW-0479">Metal-binding</keyword>
<keyword id="KW-0597">Phosphoprotein</keyword>
<keyword id="KW-1185">Reference proteome</keyword>
<comment type="function">
    <text evidence="1">Catalyzes the conversion of glucosamine-6-phosphate to glucosamine-1-phosphate.</text>
</comment>
<comment type="catalytic activity">
    <reaction evidence="1">
        <text>alpha-D-glucosamine 1-phosphate = D-glucosamine 6-phosphate</text>
        <dbReference type="Rhea" id="RHEA:23424"/>
        <dbReference type="ChEBI" id="CHEBI:58516"/>
        <dbReference type="ChEBI" id="CHEBI:58725"/>
        <dbReference type="EC" id="5.4.2.10"/>
    </reaction>
</comment>
<comment type="cofactor">
    <cofactor evidence="1">
        <name>Mg(2+)</name>
        <dbReference type="ChEBI" id="CHEBI:18420"/>
    </cofactor>
    <text evidence="1">Binds 1 Mg(2+) ion per subunit.</text>
</comment>
<comment type="PTM">
    <text evidence="1">Activated by phosphorylation.</text>
</comment>
<comment type="similarity">
    <text evidence="1">Belongs to the phosphohexose mutase family.</text>
</comment>